<name>TRPD_PROM2</name>
<comment type="function">
    <text evidence="1">Catalyzes the transfer of the phosphoribosyl group of 5-phosphorylribose-1-pyrophosphate (PRPP) to anthranilate to yield N-(5'-phosphoribosyl)-anthranilate (PRA).</text>
</comment>
<comment type="catalytic activity">
    <reaction evidence="1">
        <text>N-(5-phospho-beta-D-ribosyl)anthranilate + diphosphate = 5-phospho-alpha-D-ribose 1-diphosphate + anthranilate</text>
        <dbReference type="Rhea" id="RHEA:11768"/>
        <dbReference type="ChEBI" id="CHEBI:16567"/>
        <dbReference type="ChEBI" id="CHEBI:18277"/>
        <dbReference type="ChEBI" id="CHEBI:33019"/>
        <dbReference type="ChEBI" id="CHEBI:58017"/>
        <dbReference type="EC" id="2.4.2.18"/>
    </reaction>
</comment>
<comment type="cofactor">
    <cofactor evidence="1">
        <name>Mg(2+)</name>
        <dbReference type="ChEBI" id="CHEBI:18420"/>
    </cofactor>
    <text evidence="1">Binds 2 magnesium ions per monomer.</text>
</comment>
<comment type="pathway">
    <text evidence="1">Amino-acid biosynthesis; L-tryptophan biosynthesis; L-tryptophan from chorismate: step 2/5.</text>
</comment>
<comment type="subunit">
    <text evidence="1">Homodimer.</text>
</comment>
<comment type="similarity">
    <text evidence="1">Belongs to the anthranilate phosphoribosyltransferase family.</text>
</comment>
<protein>
    <recommendedName>
        <fullName evidence="1">Anthranilate phosphoribosyltransferase</fullName>
        <ecNumber evidence="1">2.4.2.18</ecNumber>
    </recommendedName>
</protein>
<reference key="1">
    <citation type="journal article" date="2007" name="PLoS Genet.">
        <title>Patterns and implications of gene gain and loss in the evolution of Prochlorococcus.</title>
        <authorList>
            <person name="Kettler G.C."/>
            <person name="Martiny A.C."/>
            <person name="Huang K."/>
            <person name="Zucker J."/>
            <person name="Coleman M.L."/>
            <person name="Rodrigue S."/>
            <person name="Chen F."/>
            <person name="Lapidus A."/>
            <person name="Ferriera S."/>
            <person name="Johnson J."/>
            <person name="Steglich C."/>
            <person name="Church G.M."/>
            <person name="Richardson P."/>
            <person name="Chisholm S.W."/>
        </authorList>
    </citation>
    <scope>NUCLEOTIDE SEQUENCE [LARGE SCALE GENOMIC DNA]</scope>
    <source>
        <strain>MIT 9215</strain>
    </source>
</reference>
<evidence type="ECO:0000255" key="1">
    <source>
        <dbReference type="HAMAP-Rule" id="MF_00211"/>
    </source>
</evidence>
<accession>A8G4M3</accession>
<feature type="chain" id="PRO_1000058622" description="Anthranilate phosphoribosyltransferase">
    <location>
        <begin position="1"/>
        <end position="344"/>
    </location>
</feature>
<feature type="binding site" evidence="1">
    <location>
        <position position="86"/>
    </location>
    <ligand>
        <name>5-phospho-alpha-D-ribose 1-diphosphate</name>
        <dbReference type="ChEBI" id="CHEBI:58017"/>
    </ligand>
</feature>
<feature type="binding site" evidence="1">
    <location>
        <position position="86"/>
    </location>
    <ligand>
        <name>anthranilate</name>
        <dbReference type="ChEBI" id="CHEBI:16567"/>
        <label>1</label>
    </ligand>
</feature>
<feature type="binding site" evidence="1">
    <location>
        <begin position="89"/>
        <end position="90"/>
    </location>
    <ligand>
        <name>5-phospho-alpha-D-ribose 1-diphosphate</name>
        <dbReference type="ChEBI" id="CHEBI:58017"/>
    </ligand>
</feature>
<feature type="binding site" evidence="1">
    <location>
        <position position="94"/>
    </location>
    <ligand>
        <name>5-phospho-alpha-D-ribose 1-diphosphate</name>
        <dbReference type="ChEBI" id="CHEBI:58017"/>
    </ligand>
</feature>
<feature type="binding site" evidence="1">
    <location>
        <begin position="96"/>
        <end position="99"/>
    </location>
    <ligand>
        <name>5-phospho-alpha-D-ribose 1-diphosphate</name>
        <dbReference type="ChEBI" id="CHEBI:58017"/>
    </ligand>
</feature>
<feature type="binding site" evidence="1">
    <location>
        <position position="98"/>
    </location>
    <ligand>
        <name>Mg(2+)</name>
        <dbReference type="ChEBI" id="CHEBI:18420"/>
        <label>1</label>
    </ligand>
</feature>
<feature type="binding site" evidence="1">
    <location>
        <begin position="114"/>
        <end position="122"/>
    </location>
    <ligand>
        <name>5-phospho-alpha-D-ribose 1-diphosphate</name>
        <dbReference type="ChEBI" id="CHEBI:58017"/>
    </ligand>
</feature>
<feature type="binding site" evidence="1">
    <location>
        <position position="117"/>
    </location>
    <ligand>
        <name>anthranilate</name>
        <dbReference type="ChEBI" id="CHEBI:16567"/>
        <label>1</label>
    </ligand>
</feature>
<feature type="binding site" evidence="1">
    <location>
        <position position="126"/>
    </location>
    <ligand>
        <name>5-phospho-alpha-D-ribose 1-diphosphate</name>
        <dbReference type="ChEBI" id="CHEBI:58017"/>
    </ligand>
</feature>
<feature type="binding site" evidence="1">
    <location>
        <position position="172"/>
    </location>
    <ligand>
        <name>anthranilate</name>
        <dbReference type="ChEBI" id="CHEBI:16567"/>
        <label>2</label>
    </ligand>
</feature>
<feature type="binding site" evidence="1">
    <location>
        <position position="231"/>
    </location>
    <ligand>
        <name>Mg(2+)</name>
        <dbReference type="ChEBI" id="CHEBI:18420"/>
        <label>2</label>
    </ligand>
</feature>
<feature type="binding site" evidence="1">
    <location>
        <position position="232"/>
    </location>
    <ligand>
        <name>Mg(2+)</name>
        <dbReference type="ChEBI" id="CHEBI:18420"/>
        <label>1</label>
    </ligand>
</feature>
<feature type="binding site" evidence="1">
    <location>
        <position position="232"/>
    </location>
    <ligand>
        <name>Mg(2+)</name>
        <dbReference type="ChEBI" id="CHEBI:18420"/>
        <label>2</label>
    </ligand>
</feature>
<gene>
    <name evidence="1" type="primary">trpD</name>
    <name type="ordered locus">P9215_09391</name>
</gene>
<sequence>MFSNLSNSEILNNLLEGRDLDDLTSRSLMQRWLNDKVSDVETGAFLSALRAKGSTGVELSSMAEELLNVCDLPVARPNLYLVDTCGTGGDGANTFNISTAVAFVAASCGVKIAKHGNKSASGKVGSADVLLNLGLNLNCSLEKVINAVNEIGITFLFAPVWHKSLIKLAPLRKTLGIRTVFNQLGPLVNPLRPNAQVLGVASEDFLKPMGSALLKMGMNRAIVVHGSGGLDEASLQGENKLVFVENGELRFSEINISDFNHENIANEKLVVSDFQSNDEILKSVLNGSGQKSHIDVVALNAALVLWVAGIEDDLNEGFNKALISINQGDPWKKFLLLKNYLSEN</sequence>
<proteinExistence type="inferred from homology"/>
<keyword id="KW-0028">Amino-acid biosynthesis</keyword>
<keyword id="KW-0057">Aromatic amino acid biosynthesis</keyword>
<keyword id="KW-0328">Glycosyltransferase</keyword>
<keyword id="KW-0460">Magnesium</keyword>
<keyword id="KW-0479">Metal-binding</keyword>
<keyword id="KW-0808">Transferase</keyword>
<keyword id="KW-0822">Tryptophan biosynthesis</keyword>
<organism>
    <name type="scientific">Prochlorococcus marinus (strain MIT 9215)</name>
    <dbReference type="NCBI Taxonomy" id="93060"/>
    <lineage>
        <taxon>Bacteria</taxon>
        <taxon>Bacillati</taxon>
        <taxon>Cyanobacteriota</taxon>
        <taxon>Cyanophyceae</taxon>
        <taxon>Synechococcales</taxon>
        <taxon>Prochlorococcaceae</taxon>
        <taxon>Prochlorococcus</taxon>
    </lineage>
</organism>
<dbReference type="EC" id="2.4.2.18" evidence="1"/>
<dbReference type="EMBL" id="CP000825">
    <property type="protein sequence ID" value="ABV50554.1"/>
    <property type="molecule type" value="Genomic_DNA"/>
</dbReference>
<dbReference type="RefSeq" id="WP_012007645.1">
    <property type="nucleotide sequence ID" value="NC_009840.1"/>
</dbReference>
<dbReference type="SMR" id="A8G4M3"/>
<dbReference type="STRING" id="93060.P9215_09391"/>
<dbReference type="KEGG" id="pmh:P9215_09391"/>
<dbReference type="eggNOG" id="COG0547">
    <property type="taxonomic scope" value="Bacteria"/>
</dbReference>
<dbReference type="HOGENOM" id="CLU_034315_2_1_3"/>
<dbReference type="OrthoDB" id="9806430at2"/>
<dbReference type="UniPathway" id="UPA00035">
    <property type="reaction ID" value="UER00041"/>
</dbReference>
<dbReference type="Proteomes" id="UP000002014">
    <property type="component" value="Chromosome"/>
</dbReference>
<dbReference type="GO" id="GO:0005829">
    <property type="term" value="C:cytosol"/>
    <property type="evidence" value="ECO:0007669"/>
    <property type="project" value="TreeGrafter"/>
</dbReference>
<dbReference type="GO" id="GO:0004048">
    <property type="term" value="F:anthranilate phosphoribosyltransferase activity"/>
    <property type="evidence" value="ECO:0007669"/>
    <property type="project" value="UniProtKB-UniRule"/>
</dbReference>
<dbReference type="GO" id="GO:0000287">
    <property type="term" value="F:magnesium ion binding"/>
    <property type="evidence" value="ECO:0007669"/>
    <property type="project" value="UniProtKB-UniRule"/>
</dbReference>
<dbReference type="GO" id="GO:0000162">
    <property type="term" value="P:L-tryptophan biosynthetic process"/>
    <property type="evidence" value="ECO:0007669"/>
    <property type="project" value="UniProtKB-UniRule"/>
</dbReference>
<dbReference type="FunFam" id="3.40.1030.10:FF:000002">
    <property type="entry name" value="Anthranilate phosphoribosyltransferase"/>
    <property type="match status" value="1"/>
</dbReference>
<dbReference type="Gene3D" id="3.40.1030.10">
    <property type="entry name" value="Nucleoside phosphorylase/phosphoribosyltransferase catalytic domain"/>
    <property type="match status" value="1"/>
</dbReference>
<dbReference type="Gene3D" id="1.20.970.10">
    <property type="entry name" value="Transferase, Pyrimidine Nucleoside Phosphorylase, Chain C"/>
    <property type="match status" value="1"/>
</dbReference>
<dbReference type="HAMAP" id="MF_00211">
    <property type="entry name" value="TrpD"/>
    <property type="match status" value="1"/>
</dbReference>
<dbReference type="InterPro" id="IPR005940">
    <property type="entry name" value="Anthranilate_Pribosyl_Tfrase"/>
</dbReference>
<dbReference type="InterPro" id="IPR000312">
    <property type="entry name" value="Glycosyl_Trfase_fam3"/>
</dbReference>
<dbReference type="InterPro" id="IPR017459">
    <property type="entry name" value="Glycosyl_Trfase_fam3_N_dom"/>
</dbReference>
<dbReference type="InterPro" id="IPR036320">
    <property type="entry name" value="Glycosyl_Trfase_fam3_N_dom_sf"/>
</dbReference>
<dbReference type="InterPro" id="IPR035902">
    <property type="entry name" value="Nuc_phospho_transferase"/>
</dbReference>
<dbReference type="NCBIfam" id="TIGR01245">
    <property type="entry name" value="trpD"/>
    <property type="match status" value="1"/>
</dbReference>
<dbReference type="PANTHER" id="PTHR43285">
    <property type="entry name" value="ANTHRANILATE PHOSPHORIBOSYLTRANSFERASE"/>
    <property type="match status" value="1"/>
</dbReference>
<dbReference type="PANTHER" id="PTHR43285:SF2">
    <property type="entry name" value="ANTHRANILATE PHOSPHORIBOSYLTRANSFERASE"/>
    <property type="match status" value="1"/>
</dbReference>
<dbReference type="Pfam" id="PF02885">
    <property type="entry name" value="Glycos_trans_3N"/>
    <property type="match status" value="1"/>
</dbReference>
<dbReference type="Pfam" id="PF00591">
    <property type="entry name" value="Glycos_transf_3"/>
    <property type="match status" value="1"/>
</dbReference>
<dbReference type="SUPFAM" id="SSF52418">
    <property type="entry name" value="Nucleoside phosphorylase/phosphoribosyltransferase catalytic domain"/>
    <property type="match status" value="1"/>
</dbReference>
<dbReference type="SUPFAM" id="SSF47648">
    <property type="entry name" value="Nucleoside phosphorylase/phosphoribosyltransferase N-terminal domain"/>
    <property type="match status" value="1"/>
</dbReference>